<organism>
    <name type="scientific">Xanthomonas oryzae pv. oryzae (strain MAFF 311018)</name>
    <dbReference type="NCBI Taxonomy" id="342109"/>
    <lineage>
        <taxon>Bacteria</taxon>
        <taxon>Pseudomonadati</taxon>
        <taxon>Pseudomonadota</taxon>
        <taxon>Gammaproteobacteria</taxon>
        <taxon>Lysobacterales</taxon>
        <taxon>Lysobacteraceae</taxon>
        <taxon>Xanthomonas</taxon>
    </lineage>
</organism>
<protein>
    <recommendedName>
        <fullName evidence="1">Thymidylate kinase</fullName>
        <ecNumber evidence="1">2.7.4.9</ecNumber>
    </recommendedName>
    <alternativeName>
        <fullName evidence="1">dTMP kinase</fullName>
    </alternativeName>
</protein>
<name>KTHY_XANOM</name>
<proteinExistence type="inferred from homology"/>
<sequence>MTIELKPGGLLIAIEGIDGAGKTTLARRLTTTLEAAGARVVLSKEPTNGPWGTKLRQSAATGRLSADEEAELLIRDRHEHVDTLIAPALARGDIVILDRYFPSMVAYQGAAGLPLDELLELNAFAPRPDVLLLLDLPPPTGLARIRARGDAPNHFETQDNLERCRTIFAGLELPGKHVVDASADADSVLRQAHAIIVAALADRLSGDGAPADTGKAALELLSAGRPA</sequence>
<gene>
    <name evidence="1" type="primary">tmk</name>
    <name type="ordered locus">XOO0393</name>
</gene>
<reference key="1">
    <citation type="journal article" date="2005" name="Jpn. Agric. Res. Q.">
        <title>Genome sequence of Xanthomonas oryzae pv. oryzae suggests contribution of large numbers of effector genes and insertion sequences to its race diversity.</title>
        <authorList>
            <person name="Ochiai H."/>
            <person name="Inoue Y."/>
            <person name="Takeya M."/>
            <person name="Sasaki A."/>
            <person name="Kaku H."/>
        </authorList>
    </citation>
    <scope>NUCLEOTIDE SEQUENCE [LARGE SCALE GENOMIC DNA]</scope>
    <source>
        <strain>MAFF 311018</strain>
    </source>
</reference>
<feature type="chain" id="PRO_1000023315" description="Thymidylate kinase">
    <location>
        <begin position="1"/>
        <end position="227"/>
    </location>
</feature>
<feature type="binding site" evidence="1">
    <location>
        <begin position="16"/>
        <end position="23"/>
    </location>
    <ligand>
        <name>ATP</name>
        <dbReference type="ChEBI" id="CHEBI:30616"/>
    </ligand>
</feature>
<comment type="function">
    <text evidence="1">Phosphorylation of dTMP to form dTDP in both de novo and salvage pathways of dTTP synthesis.</text>
</comment>
<comment type="catalytic activity">
    <reaction evidence="1">
        <text>dTMP + ATP = dTDP + ADP</text>
        <dbReference type="Rhea" id="RHEA:13517"/>
        <dbReference type="ChEBI" id="CHEBI:30616"/>
        <dbReference type="ChEBI" id="CHEBI:58369"/>
        <dbReference type="ChEBI" id="CHEBI:63528"/>
        <dbReference type="ChEBI" id="CHEBI:456216"/>
        <dbReference type="EC" id="2.7.4.9"/>
    </reaction>
</comment>
<comment type="similarity">
    <text evidence="1">Belongs to the thymidylate kinase family.</text>
</comment>
<keyword id="KW-0067">ATP-binding</keyword>
<keyword id="KW-0418">Kinase</keyword>
<keyword id="KW-0545">Nucleotide biosynthesis</keyword>
<keyword id="KW-0547">Nucleotide-binding</keyword>
<keyword id="KW-0808">Transferase</keyword>
<evidence type="ECO:0000255" key="1">
    <source>
        <dbReference type="HAMAP-Rule" id="MF_00165"/>
    </source>
</evidence>
<accession>Q2P8H9</accession>
<dbReference type="EC" id="2.7.4.9" evidence="1"/>
<dbReference type="EMBL" id="AP008229">
    <property type="protein sequence ID" value="BAE67148.1"/>
    <property type="molecule type" value="Genomic_DNA"/>
</dbReference>
<dbReference type="RefSeq" id="WP_011257363.1">
    <property type="nucleotide sequence ID" value="NC_007705.1"/>
</dbReference>
<dbReference type="SMR" id="Q2P8H9"/>
<dbReference type="KEGG" id="xom:XOO0393"/>
<dbReference type="HOGENOM" id="CLU_049131_0_2_6"/>
<dbReference type="GO" id="GO:0005829">
    <property type="term" value="C:cytosol"/>
    <property type="evidence" value="ECO:0007669"/>
    <property type="project" value="TreeGrafter"/>
</dbReference>
<dbReference type="GO" id="GO:0005524">
    <property type="term" value="F:ATP binding"/>
    <property type="evidence" value="ECO:0007669"/>
    <property type="project" value="UniProtKB-UniRule"/>
</dbReference>
<dbReference type="GO" id="GO:0004798">
    <property type="term" value="F:dTMP kinase activity"/>
    <property type="evidence" value="ECO:0007669"/>
    <property type="project" value="UniProtKB-UniRule"/>
</dbReference>
<dbReference type="GO" id="GO:0006233">
    <property type="term" value="P:dTDP biosynthetic process"/>
    <property type="evidence" value="ECO:0007669"/>
    <property type="project" value="InterPro"/>
</dbReference>
<dbReference type="GO" id="GO:0006235">
    <property type="term" value="P:dTTP biosynthetic process"/>
    <property type="evidence" value="ECO:0007669"/>
    <property type="project" value="UniProtKB-UniRule"/>
</dbReference>
<dbReference type="GO" id="GO:0006227">
    <property type="term" value="P:dUDP biosynthetic process"/>
    <property type="evidence" value="ECO:0007669"/>
    <property type="project" value="TreeGrafter"/>
</dbReference>
<dbReference type="CDD" id="cd01672">
    <property type="entry name" value="TMPK"/>
    <property type="match status" value="1"/>
</dbReference>
<dbReference type="Gene3D" id="3.40.50.300">
    <property type="entry name" value="P-loop containing nucleotide triphosphate hydrolases"/>
    <property type="match status" value="1"/>
</dbReference>
<dbReference type="HAMAP" id="MF_00165">
    <property type="entry name" value="Thymidylate_kinase"/>
    <property type="match status" value="1"/>
</dbReference>
<dbReference type="InterPro" id="IPR027417">
    <property type="entry name" value="P-loop_NTPase"/>
</dbReference>
<dbReference type="InterPro" id="IPR039430">
    <property type="entry name" value="Thymidylate_kin-like_dom"/>
</dbReference>
<dbReference type="InterPro" id="IPR018094">
    <property type="entry name" value="Thymidylate_kinase"/>
</dbReference>
<dbReference type="NCBIfam" id="TIGR00041">
    <property type="entry name" value="DTMP_kinase"/>
    <property type="match status" value="1"/>
</dbReference>
<dbReference type="PANTHER" id="PTHR10344">
    <property type="entry name" value="THYMIDYLATE KINASE"/>
    <property type="match status" value="1"/>
</dbReference>
<dbReference type="PANTHER" id="PTHR10344:SF4">
    <property type="entry name" value="UMP-CMP KINASE 2, MITOCHONDRIAL"/>
    <property type="match status" value="1"/>
</dbReference>
<dbReference type="Pfam" id="PF02223">
    <property type="entry name" value="Thymidylate_kin"/>
    <property type="match status" value="1"/>
</dbReference>
<dbReference type="SUPFAM" id="SSF52540">
    <property type="entry name" value="P-loop containing nucleoside triphosphate hydrolases"/>
    <property type="match status" value="1"/>
</dbReference>